<reference key="1">
    <citation type="journal article" date="2006" name="BMC Genomics">
        <title>Complete genome sequence of Shigella flexneri 5b and comparison with Shigella flexneri 2a.</title>
        <authorList>
            <person name="Nie H."/>
            <person name="Yang F."/>
            <person name="Zhang X."/>
            <person name="Yang J."/>
            <person name="Chen L."/>
            <person name="Wang J."/>
            <person name="Xiong Z."/>
            <person name="Peng J."/>
            <person name="Sun L."/>
            <person name="Dong J."/>
            <person name="Xue Y."/>
            <person name="Xu X."/>
            <person name="Chen S."/>
            <person name="Yao Z."/>
            <person name="Shen Y."/>
            <person name="Jin Q."/>
        </authorList>
    </citation>
    <scope>NUCLEOTIDE SEQUENCE [LARGE SCALE GENOMIC DNA]</scope>
    <source>
        <strain>8401</strain>
    </source>
</reference>
<comment type="function">
    <text evidence="1">Catalyzes the hydrolysis of UDP-3-O-myristoyl-N-acetylglucosamine to form UDP-3-O-myristoylglucosamine and acetate, the committed step in lipid A biosynthesis.</text>
</comment>
<comment type="catalytic activity">
    <reaction evidence="1">
        <text>a UDP-3-O-[(3R)-3-hydroxyacyl]-N-acetyl-alpha-D-glucosamine + H2O = a UDP-3-O-[(3R)-3-hydroxyacyl]-alpha-D-glucosamine + acetate</text>
        <dbReference type="Rhea" id="RHEA:67816"/>
        <dbReference type="ChEBI" id="CHEBI:15377"/>
        <dbReference type="ChEBI" id="CHEBI:30089"/>
        <dbReference type="ChEBI" id="CHEBI:137740"/>
        <dbReference type="ChEBI" id="CHEBI:173225"/>
        <dbReference type="EC" id="3.5.1.108"/>
    </reaction>
</comment>
<comment type="cofactor">
    <cofactor evidence="1">
        <name>Zn(2+)</name>
        <dbReference type="ChEBI" id="CHEBI:29105"/>
    </cofactor>
</comment>
<comment type="pathway">
    <text evidence="1">Glycolipid biosynthesis; lipid IV(A) biosynthesis; lipid IV(A) from (3R)-3-hydroxytetradecanoyl-[acyl-carrier-protein] and UDP-N-acetyl-alpha-D-glucosamine: step 2/6.</text>
</comment>
<comment type="similarity">
    <text evidence="1">Belongs to the LpxC family.</text>
</comment>
<name>LPXC_SHIF8</name>
<sequence>MIKQRTLKRIVQATGVGLHTGKKVTLTLRPAPANTGVIYRRTDLNPPVDFPADAKSVRDTMLCTCLVNEHDVRISTVEHLNAALAGLGIDNIVIEVNAPEIPIMDGSAAPFVYLLLDAGIDELNCAKKFVRIKETVRVEDGDKWAEFKPYNGFSLDFTIDFNHPAIDSSNQRYAMNFSADAFMRQISRARTFGFMRDIEYLQSRGLCLGGSFDCAIVVDDYRVLNEDGLRFEDEFVRHKMLDAIGDLFMCGHNIIGAFTAYKSGHALNNKLLQAVLAKQEAWEYVTFQDDAELPLAFKAPSAVLA</sequence>
<proteinExistence type="inferred from homology"/>
<protein>
    <recommendedName>
        <fullName evidence="1">UDP-3-O-acyl-N-acetylglucosamine deacetylase</fullName>
        <shortName evidence="1">UDP-3-O-acyl-GlcNAc deacetylase</shortName>
        <ecNumber evidence="1">3.5.1.108</ecNumber>
    </recommendedName>
    <alternativeName>
        <fullName evidence="1">UDP-3-O-[R-3-hydroxymyristoyl]-N-acetylglucosamine deacetylase</fullName>
    </alternativeName>
</protein>
<evidence type="ECO:0000255" key="1">
    <source>
        <dbReference type="HAMAP-Rule" id="MF_00388"/>
    </source>
</evidence>
<keyword id="KW-0378">Hydrolase</keyword>
<keyword id="KW-0441">Lipid A biosynthesis</keyword>
<keyword id="KW-0444">Lipid biosynthesis</keyword>
<keyword id="KW-0443">Lipid metabolism</keyword>
<keyword id="KW-0479">Metal-binding</keyword>
<keyword id="KW-0862">Zinc</keyword>
<organism>
    <name type="scientific">Shigella flexneri serotype 5b (strain 8401)</name>
    <dbReference type="NCBI Taxonomy" id="373384"/>
    <lineage>
        <taxon>Bacteria</taxon>
        <taxon>Pseudomonadati</taxon>
        <taxon>Pseudomonadota</taxon>
        <taxon>Gammaproteobacteria</taxon>
        <taxon>Enterobacterales</taxon>
        <taxon>Enterobacteriaceae</taxon>
        <taxon>Shigella</taxon>
    </lineage>
</organism>
<feature type="chain" id="PRO_1000013236" description="UDP-3-O-acyl-N-acetylglucosamine deacetylase">
    <location>
        <begin position="1"/>
        <end position="305"/>
    </location>
</feature>
<feature type="active site" description="Proton donor" evidence="1">
    <location>
        <position position="265"/>
    </location>
</feature>
<feature type="binding site" evidence="1">
    <location>
        <position position="79"/>
    </location>
    <ligand>
        <name>Zn(2+)</name>
        <dbReference type="ChEBI" id="CHEBI:29105"/>
    </ligand>
</feature>
<feature type="binding site" evidence="1">
    <location>
        <position position="238"/>
    </location>
    <ligand>
        <name>Zn(2+)</name>
        <dbReference type="ChEBI" id="CHEBI:29105"/>
    </ligand>
</feature>
<feature type="binding site" evidence="1">
    <location>
        <position position="242"/>
    </location>
    <ligand>
        <name>Zn(2+)</name>
        <dbReference type="ChEBI" id="CHEBI:29105"/>
    </ligand>
</feature>
<dbReference type="EC" id="3.5.1.108" evidence="1"/>
<dbReference type="EMBL" id="CP000266">
    <property type="protein sequence ID" value="ABF02375.1"/>
    <property type="molecule type" value="Genomic_DNA"/>
</dbReference>
<dbReference type="RefSeq" id="WP_000595482.1">
    <property type="nucleotide sequence ID" value="NC_008258.1"/>
</dbReference>
<dbReference type="SMR" id="Q0T8A1"/>
<dbReference type="GeneID" id="93777338"/>
<dbReference type="KEGG" id="sfv:SFV_0089"/>
<dbReference type="HOGENOM" id="CLU_046528_1_0_6"/>
<dbReference type="UniPathway" id="UPA00359">
    <property type="reaction ID" value="UER00478"/>
</dbReference>
<dbReference type="Proteomes" id="UP000000659">
    <property type="component" value="Chromosome"/>
</dbReference>
<dbReference type="GO" id="GO:0016020">
    <property type="term" value="C:membrane"/>
    <property type="evidence" value="ECO:0007669"/>
    <property type="project" value="GOC"/>
</dbReference>
<dbReference type="GO" id="GO:0046872">
    <property type="term" value="F:metal ion binding"/>
    <property type="evidence" value="ECO:0007669"/>
    <property type="project" value="UniProtKB-KW"/>
</dbReference>
<dbReference type="GO" id="GO:0103117">
    <property type="term" value="F:UDP-3-O-acyl-N-acetylglucosamine deacetylase activity"/>
    <property type="evidence" value="ECO:0007669"/>
    <property type="project" value="UniProtKB-UniRule"/>
</dbReference>
<dbReference type="GO" id="GO:0009245">
    <property type="term" value="P:lipid A biosynthetic process"/>
    <property type="evidence" value="ECO:0007669"/>
    <property type="project" value="UniProtKB-UniRule"/>
</dbReference>
<dbReference type="FunFam" id="3.30.1700.10:FF:000001">
    <property type="entry name" value="UDP-3-O-acyl-N-acetylglucosamine deacetylase"/>
    <property type="match status" value="1"/>
</dbReference>
<dbReference type="FunFam" id="3.30.230.20:FF:000001">
    <property type="entry name" value="UDP-3-O-acyl-N-acetylglucosamine deacetylase"/>
    <property type="match status" value="1"/>
</dbReference>
<dbReference type="Gene3D" id="3.30.230.20">
    <property type="entry name" value="lpxc deacetylase, domain 1"/>
    <property type="match status" value="1"/>
</dbReference>
<dbReference type="Gene3D" id="3.30.1700.10">
    <property type="entry name" value="lpxc deacetylase, domain 2"/>
    <property type="match status" value="1"/>
</dbReference>
<dbReference type="HAMAP" id="MF_00388">
    <property type="entry name" value="LpxC"/>
    <property type="match status" value="1"/>
</dbReference>
<dbReference type="InterPro" id="IPR020568">
    <property type="entry name" value="Ribosomal_Su5_D2-typ_SF"/>
</dbReference>
<dbReference type="InterPro" id="IPR004463">
    <property type="entry name" value="UDP-acyl_GlcNac_deAcase"/>
</dbReference>
<dbReference type="InterPro" id="IPR011334">
    <property type="entry name" value="UDP-acyl_GlcNac_deAcase_C"/>
</dbReference>
<dbReference type="InterPro" id="IPR015870">
    <property type="entry name" value="UDP-acyl_N-AcGlcN_deAcase_N"/>
</dbReference>
<dbReference type="NCBIfam" id="TIGR00325">
    <property type="entry name" value="lpxC"/>
    <property type="match status" value="1"/>
</dbReference>
<dbReference type="PANTHER" id="PTHR33694">
    <property type="entry name" value="UDP-3-O-ACYL-N-ACETYLGLUCOSAMINE DEACETYLASE 1, MITOCHONDRIAL-RELATED"/>
    <property type="match status" value="1"/>
</dbReference>
<dbReference type="PANTHER" id="PTHR33694:SF1">
    <property type="entry name" value="UDP-3-O-ACYL-N-ACETYLGLUCOSAMINE DEACETYLASE 1, MITOCHONDRIAL-RELATED"/>
    <property type="match status" value="1"/>
</dbReference>
<dbReference type="Pfam" id="PF03331">
    <property type="entry name" value="LpxC"/>
    <property type="match status" value="1"/>
</dbReference>
<dbReference type="SUPFAM" id="SSF54211">
    <property type="entry name" value="Ribosomal protein S5 domain 2-like"/>
    <property type="match status" value="2"/>
</dbReference>
<accession>Q0T8A1</accession>
<gene>
    <name evidence="1" type="primary">lpxC</name>
    <name type="ordered locus">SFV_0089</name>
</gene>